<organismHost>
    <name type="scientific">Vertebrata</name>
    <dbReference type="NCBI Taxonomy" id="7742"/>
</organismHost>
<accession>Q9J524</accession>
<feature type="signal peptide" evidence="2">
    <location>
        <begin position="1"/>
        <end position="48"/>
    </location>
</feature>
<feature type="chain" id="PRO_0000007606" description="Probable growth factor FPV211">
    <location>
        <begin position="49"/>
        <end position="125"/>
    </location>
</feature>
<feature type="domain" description="EGF-like" evidence="3">
    <location>
        <begin position="80"/>
        <end position="120"/>
    </location>
</feature>
<feature type="disulfide bond" evidence="3">
    <location>
        <begin position="84"/>
        <end position="97"/>
    </location>
</feature>
<feature type="disulfide bond" evidence="3">
    <location>
        <begin position="92"/>
        <end position="108"/>
    </location>
</feature>
<feature type="disulfide bond" evidence="3">
    <location>
        <begin position="110"/>
        <end position="119"/>
    </location>
</feature>
<proteinExistence type="inferred from homology"/>
<gene>
    <name type="ordered locus">FPV211</name>
</gene>
<comment type="subcellular location">
    <subcellularLocation>
        <location evidence="1">Secreted</location>
    </subcellularLocation>
</comment>
<organism>
    <name type="scientific">Fowlpox virus (strain NVSL)</name>
    <name type="common">FPV</name>
    <dbReference type="NCBI Taxonomy" id="928301"/>
    <lineage>
        <taxon>Viruses</taxon>
        <taxon>Varidnaviria</taxon>
        <taxon>Bamfordvirae</taxon>
        <taxon>Nucleocytoviricota</taxon>
        <taxon>Pokkesviricetes</taxon>
        <taxon>Chitovirales</taxon>
        <taxon>Poxviridae</taxon>
        <taxon>Chordopoxvirinae</taxon>
        <taxon>Avipoxvirus</taxon>
        <taxon>Fowlpox virus</taxon>
    </lineage>
</organism>
<name>V211_FOWPN</name>
<evidence type="ECO:0000250" key="1"/>
<evidence type="ECO:0000255" key="2"/>
<evidence type="ECO:0000255" key="3">
    <source>
        <dbReference type="PROSITE-ProRule" id="PRU00076"/>
    </source>
</evidence>
<reference key="1">
    <citation type="journal article" date="2000" name="J. Virol.">
        <title>The genome of fowlpox virus.</title>
        <authorList>
            <person name="Afonso C.L."/>
            <person name="Tulman E.R."/>
            <person name="Lu Z."/>
            <person name="Zsak L."/>
            <person name="Kutish G.F."/>
            <person name="Rock D.L."/>
        </authorList>
    </citation>
    <scope>NUCLEOTIDE SEQUENCE [LARGE SCALE GENOMIC DNA]</scope>
</reference>
<sequence>MKEPLIEVKREYNLIKTLTGKKFVVSTSIVVVLLIINMIFYGIRIHELAVIRRNSETHISSFNYKGQAQAQNKRVKNTRLFEKCKSKFNNFCIYGECMNIINLDKKFCICNKGYTGNRCDIVSIR</sequence>
<dbReference type="EMBL" id="AF198100">
    <property type="protein sequence ID" value="AAF44555.1"/>
    <property type="molecule type" value="Genomic_DNA"/>
</dbReference>
<dbReference type="RefSeq" id="NP_039174.1">
    <property type="nucleotide sequence ID" value="NC_002188.1"/>
</dbReference>
<dbReference type="SMR" id="Q9J524"/>
<dbReference type="GeneID" id="1486783"/>
<dbReference type="KEGG" id="vg:1486783"/>
<dbReference type="Proteomes" id="UP000008597">
    <property type="component" value="Segment"/>
</dbReference>
<dbReference type="GO" id="GO:0005615">
    <property type="term" value="C:extracellular space"/>
    <property type="evidence" value="ECO:0007669"/>
    <property type="project" value="TreeGrafter"/>
</dbReference>
<dbReference type="GO" id="GO:0005154">
    <property type="term" value="F:epidermal growth factor receptor binding"/>
    <property type="evidence" value="ECO:0007669"/>
    <property type="project" value="TreeGrafter"/>
</dbReference>
<dbReference type="GO" id="GO:0008083">
    <property type="term" value="F:growth factor activity"/>
    <property type="evidence" value="ECO:0007669"/>
    <property type="project" value="UniProtKB-KW"/>
</dbReference>
<dbReference type="GO" id="GO:0007173">
    <property type="term" value="P:epidermal growth factor receptor signaling pathway"/>
    <property type="evidence" value="ECO:0007669"/>
    <property type="project" value="TreeGrafter"/>
</dbReference>
<dbReference type="GO" id="GO:0008284">
    <property type="term" value="P:positive regulation of cell population proliferation"/>
    <property type="evidence" value="ECO:0007669"/>
    <property type="project" value="TreeGrafter"/>
</dbReference>
<dbReference type="GO" id="GO:0045840">
    <property type="term" value="P:positive regulation of mitotic nuclear division"/>
    <property type="evidence" value="ECO:0007669"/>
    <property type="project" value="TreeGrafter"/>
</dbReference>
<dbReference type="Gene3D" id="2.10.25.10">
    <property type="entry name" value="Laminin"/>
    <property type="match status" value="1"/>
</dbReference>
<dbReference type="InterPro" id="IPR000742">
    <property type="entry name" value="EGF-like_dom"/>
</dbReference>
<dbReference type="PANTHER" id="PTHR10740:SF14">
    <property type="entry name" value="EGF-LIKE DOMAIN-CONTAINING PROTEIN"/>
    <property type="match status" value="1"/>
</dbReference>
<dbReference type="PANTHER" id="PTHR10740">
    <property type="entry name" value="TRANSFORMING GROWTH FACTOR ALPHA"/>
    <property type="match status" value="1"/>
</dbReference>
<dbReference type="PRINTS" id="PR00009">
    <property type="entry name" value="EGFTGF"/>
</dbReference>
<dbReference type="SUPFAM" id="SSF57196">
    <property type="entry name" value="EGF/Laminin"/>
    <property type="match status" value="1"/>
</dbReference>
<dbReference type="PROSITE" id="PS00022">
    <property type="entry name" value="EGF_1"/>
    <property type="match status" value="1"/>
</dbReference>
<dbReference type="PROSITE" id="PS01186">
    <property type="entry name" value="EGF_2"/>
    <property type="match status" value="1"/>
</dbReference>
<dbReference type="PROSITE" id="PS50026">
    <property type="entry name" value="EGF_3"/>
    <property type="match status" value="1"/>
</dbReference>
<keyword id="KW-1015">Disulfide bond</keyword>
<keyword id="KW-0245">EGF-like domain</keyword>
<keyword id="KW-0339">Growth factor</keyword>
<keyword id="KW-1185">Reference proteome</keyword>
<keyword id="KW-0964">Secreted</keyword>
<keyword id="KW-0732">Signal</keyword>
<protein>
    <recommendedName>
        <fullName>Probable growth factor FPV211</fullName>
    </recommendedName>
</protein>